<feature type="chain" id="PRO_1000127791" description="dTTP/UTP pyrophosphatase">
    <location>
        <begin position="1"/>
        <end position="191"/>
    </location>
</feature>
<feature type="active site" description="Proton acceptor" evidence="1">
    <location>
        <position position="65"/>
    </location>
</feature>
<feature type="site" description="Important for substrate specificity" evidence="1">
    <location>
        <position position="10"/>
    </location>
</feature>
<feature type="site" description="Important for substrate specificity" evidence="1">
    <location>
        <position position="66"/>
    </location>
</feature>
<feature type="site" description="Important for substrate specificity" evidence="1">
    <location>
        <position position="148"/>
    </location>
</feature>
<protein>
    <recommendedName>
        <fullName evidence="1">dTTP/UTP pyrophosphatase</fullName>
        <shortName evidence="1">dTTPase/UTPase</shortName>
        <ecNumber evidence="1">3.6.1.9</ecNumber>
    </recommendedName>
    <alternativeName>
        <fullName evidence="1">Nucleoside triphosphate pyrophosphatase</fullName>
    </alternativeName>
    <alternativeName>
        <fullName evidence="1">Nucleotide pyrophosphatase</fullName>
        <shortName evidence="1">Nucleotide PPase</shortName>
    </alternativeName>
</protein>
<sequence length="191" mass="22348">MFVLKSASPRRKQILFDLGFDLKIDPEHIDESQKELESPLEYLERMVHSKLGTLFEPNNVYLAADTIVVYQNQILHKPIDTNDAFRILKILSGKNHSVFSGAALRHPNGTEYFYEETMIGFQNWNDFEINEYIKRSKPFDKAGSYGIQDKEGPVLQWIGSYTNVMGFPLRSFLSRHELWIGSWEERIMRRD</sequence>
<comment type="function">
    <text evidence="1">Nucleoside triphosphate pyrophosphatase that hydrolyzes dTTP and UTP. May have a dual role in cell division arrest and in preventing the incorporation of modified nucleotides into cellular nucleic acids.</text>
</comment>
<comment type="catalytic activity">
    <reaction evidence="1">
        <text>dTTP + H2O = dTMP + diphosphate + H(+)</text>
        <dbReference type="Rhea" id="RHEA:28534"/>
        <dbReference type="ChEBI" id="CHEBI:15377"/>
        <dbReference type="ChEBI" id="CHEBI:15378"/>
        <dbReference type="ChEBI" id="CHEBI:33019"/>
        <dbReference type="ChEBI" id="CHEBI:37568"/>
        <dbReference type="ChEBI" id="CHEBI:63528"/>
        <dbReference type="EC" id="3.6.1.9"/>
    </reaction>
</comment>
<comment type="catalytic activity">
    <reaction evidence="1">
        <text>UTP + H2O = UMP + diphosphate + H(+)</text>
        <dbReference type="Rhea" id="RHEA:29395"/>
        <dbReference type="ChEBI" id="CHEBI:15377"/>
        <dbReference type="ChEBI" id="CHEBI:15378"/>
        <dbReference type="ChEBI" id="CHEBI:33019"/>
        <dbReference type="ChEBI" id="CHEBI:46398"/>
        <dbReference type="ChEBI" id="CHEBI:57865"/>
        <dbReference type="EC" id="3.6.1.9"/>
    </reaction>
</comment>
<comment type="cofactor">
    <cofactor evidence="1">
        <name>a divalent metal cation</name>
        <dbReference type="ChEBI" id="CHEBI:60240"/>
    </cofactor>
</comment>
<comment type="subcellular location">
    <subcellularLocation>
        <location evidence="1">Cytoplasm</location>
    </subcellularLocation>
</comment>
<comment type="similarity">
    <text evidence="1">Belongs to the Maf family. YhdE subfamily.</text>
</comment>
<accession>B0S919</accession>
<reference key="1">
    <citation type="journal article" date="2008" name="PLoS ONE">
        <title>Genome sequence of the saprophyte Leptospira biflexa provides insights into the evolution of Leptospira and the pathogenesis of leptospirosis.</title>
        <authorList>
            <person name="Picardeau M."/>
            <person name="Bulach D.M."/>
            <person name="Bouchier C."/>
            <person name="Zuerner R.L."/>
            <person name="Zidane N."/>
            <person name="Wilson P.J."/>
            <person name="Creno S."/>
            <person name="Kuczek E.S."/>
            <person name="Bommezzadri S."/>
            <person name="Davis J.C."/>
            <person name="McGrath A."/>
            <person name="Johnson M.J."/>
            <person name="Boursaux-Eude C."/>
            <person name="Seemann T."/>
            <person name="Rouy Z."/>
            <person name="Coppel R.L."/>
            <person name="Rood J.I."/>
            <person name="Lajus A."/>
            <person name="Davies J.K."/>
            <person name="Medigue C."/>
            <person name="Adler B."/>
        </authorList>
    </citation>
    <scope>NUCLEOTIDE SEQUENCE [LARGE SCALE GENOMIC DNA]</scope>
    <source>
        <strain>Patoc 1 / Ames</strain>
    </source>
</reference>
<keyword id="KW-0963">Cytoplasm</keyword>
<keyword id="KW-0378">Hydrolase</keyword>
<keyword id="KW-0546">Nucleotide metabolism</keyword>
<name>NTPPA_LEPBA</name>
<proteinExistence type="inferred from homology"/>
<organism>
    <name type="scientific">Leptospira biflexa serovar Patoc (strain Patoc 1 / Ames)</name>
    <dbReference type="NCBI Taxonomy" id="355278"/>
    <lineage>
        <taxon>Bacteria</taxon>
        <taxon>Pseudomonadati</taxon>
        <taxon>Spirochaetota</taxon>
        <taxon>Spirochaetia</taxon>
        <taxon>Leptospirales</taxon>
        <taxon>Leptospiraceae</taxon>
        <taxon>Leptospira</taxon>
    </lineage>
</organism>
<gene>
    <name type="ordered locus">LBF_0016</name>
</gene>
<evidence type="ECO:0000255" key="1">
    <source>
        <dbReference type="HAMAP-Rule" id="MF_00528"/>
    </source>
</evidence>
<dbReference type="EC" id="3.6.1.9" evidence="1"/>
<dbReference type="EMBL" id="CP000777">
    <property type="protein sequence ID" value="ABZ92563.1"/>
    <property type="molecule type" value="Genomic_DNA"/>
</dbReference>
<dbReference type="RefSeq" id="WP_012387052.1">
    <property type="nucleotide sequence ID" value="NC_010842.1"/>
</dbReference>
<dbReference type="SMR" id="B0S919"/>
<dbReference type="KEGG" id="lbf:LBF_0016"/>
<dbReference type="HOGENOM" id="CLU_040416_0_0_12"/>
<dbReference type="GO" id="GO:0005737">
    <property type="term" value="C:cytoplasm"/>
    <property type="evidence" value="ECO:0007669"/>
    <property type="project" value="UniProtKB-SubCell"/>
</dbReference>
<dbReference type="GO" id="GO:0036218">
    <property type="term" value="F:dTTP diphosphatase activity"/>
    <property type="evidence" value="ECO:0007669"/>
    <property type="project" value="RHEA"/>
</dbReference>
<dbReference type="GO" id="GO:0036221">
    <property type="term" value="F:UTP diphosphatase activity"/>
    <property type="evidence" value="ECO:0007669"/>
    <property type="project" value="RHEA"/>
</dbReference>
<dbReference type="GO" id="GO:0009117">
    <property type="term" value="P:nucleotide metabolic process"/>
    <property type="evidence" value="ECO:0007669"/>
    <property type="project" value="UniProtKB-KW"/>
</dbReference>
<dbReference type="CDD" id="cd00555">
    <property type="entry name" value="Maf"/>
    <property type="match status" value="1"/>
</dbReference>
<dbReference type="Gene3D" id="3.90.950.10">
    <property type="match status" value="1"/>
</dbReference>
<dbReference type="HAMAP" id="MF_00528">
    <property type="entry name" value="Maf"/>
    <property type="match status" value="1"/>
</dbReference>
<dbReference type="InterPro" id="IPR029001">
    <property type="entry name" value="ITPase-like_fam"/>
</dbReference>
<dbReference type="InterPro" id="IPR003697">
    <property type="entry name" value="Maf-like"/>
</dbReference>
<dbReference type="NCBIfam" id="TIGR00172">
    <property type="entry name" value="maf"/>
    <property type="match status" value="1"/>
</dbReference>
<dbReference type="PANTHER" id="PTHR43213">
    <property type="entry name" value="BIFUNCTIONAL DTTP/UTP PYROPHOSPHATASE/METHYLTRANSFERASE PROTEIN-RELATED"/>
    <property type="match status" value="1"/>
</dbReference>
<dbReference type="PANTHER" id="PTHR43213:SF5">
    <property type="entry name" value="BIFUNCTIONAL DTTP_UTP PYROPHOSPHATASE_METHYLTRANSFERASE PROTEIN-RELATED"/>
    <property type="match status" value="1"/>
</dbReference>
<dbReference type="Pfam" id="PF02545">
    <property type="entry name" value="Maf"/>
    <property type="match status" value="1"/>
</dbReference>
<dbReference type="PIRSF" id="PIRSF006305">
    <property type="entry name" value="Maf"/>
    <property type="match status" value="1"/>
</dbReference>
<dbReference type="SUPFAM" id="SSF52972">
    <property type="entry name" value="ITPase-like"/>
    <property type="match status" value="1"/>
</dbReference>